<dbReference type="EC" id="3.4.25.1" evidence="1"/>
<dbReference type="EMBL" id="U22157">
    <property type="protein sequence ID" value="AAA91642.1"/>
    <property type="molecule type" value="Genomic_DNA"/>
</dbReference>
<dbReference type="PIR" id="T48879">
    <property type="entry name" value="T48879"/>
</dbReference>
<dbReference type="SMR" id="Q9P992"/>
<dbReference type="MEROPS" id="T01.002"/>
<dbReference type="GO" id="GO:0005737">
    <property type="term" value="C:cytoplasm"/>
    <property type="evidence" value="ECO:0007669"/>
    <property type="project" value="UniProtKB-SubCell"/>
</dbReference>
<dbReference type="GO" id="GO:0019774">
    <property type="term" value="C:proteasome core complex, beta-subunit complex"/>
    <property type="evidence" value="ECO:0000250"/>
    <property type="project" value="UniProtKB"/>
</dbReference>
<dbReference type="GO" id="GO:0004298">
    <property type="term" value="F:threonine-type endopeptidase activity"/>
    <property type="evidence" value="ECO:0007669"/>
    <property type="project" value="UniProtKB-UniRule"/>
</dbReference>
<dbReference type="GO" id="GO:0010498">
    <property type="term" value="P:proteasomal protein catabolic process"/>
    <property type="evidence" value="ECO:0007669"/>
    <property type="project" value="UniProtKB-UniRule"/>
</dbReference>
<dbReference type="CDD" id="cd03764">
    <property type="entry name" value="proteasome_beta_archeal"/>
    <property type="match status" value="1"/>
</dbReference>
<dbReference type="FunFam" id="3.60.20.10:FF:000049">
    <property type="entry name" value="Proteasome subunit beta"/>
    <property type="match status" value="1"/>
</dbReference>
<dbReference type="Gene3D" id="3.60.20.10">
    <property type="entry name" value="Glutamine Phosphoribosylpyrophosphate, subunit 1, domain 1"/>
    <property type="match status" value="1"/>
</dbReference>
<dbReference type="HAMAP" id="MF_02113_A">
    <property type="entry name" value="Proteasome_B_A"/>
    <property type="match status" value="1"/>
</dbReference>
<dbReference type="InterPro" id="IPR029055">
    <property type="entry name" value="Ntn_hydrolases_N"/>
</dbReference>
<dbReference type="InterPro" id="IPR019983">
    <property type="entry name" value="Pept_T1A_Psome_bsu_arc"/>
</dbReference>
<dbReference type="InterPro" id="IPR000243">
    <property type="entry name" value="Pept_T1A_subB"/>
</dbReference>
<dbReference type="InterPro" id="IPR016050">
    <property type="entry name" value="Proteasome_bsu_CS"/>
</dbReference>
<dbReference type="InterPro" id="IPR001353">
    <property type="entry name" value="Proteasome_sua/b"/>
</dbReference>
<dbReference type="InterPro" id="IPR023333">
    <property type="entry name" value="Proteasome_suB-type"/>
</dbReference>
<dbReference type="NCBIfam" id="TIGR03634">
    <property type="entry name" value="arc_protsome_B"/>
    <property type="match status" value="1"/>
</dbReference>
<dbReference type="PANTHER" id="PTHR32194:SF0">
    <property type="entry name" value="ATP-DEPENDENT PROTEASE SUBUNIT HSLV"/>
    <property type="match status" value="1"/>
</dbReference>
<dbReference type="PANTHER" id="PTHR32194">
    <property type="entry name" value="METALLOPROTEASE TLDD"/>
    <property type="match status" value="1"/>
</dbReference>
<dbReference type="Pfam" id="PF00227">
    <property type="entry name" value="Proteasome"/>
    <property type="match status" value="1"/>
</dbReference>
<dbReference type="PRINTS" id="PR00141">
    <property type="entry name" value="PROTEASOME"/>
</dbReference>
<dbReference type="SUPFAM" id="SSF56235">
    <property type="entry name" value="N-terminal nucleophile aminohydrolases (Ntn hydrolases)"/>
    <property type="match status" value="1"/>
</dbReference>
<dbReference type="PROSITE" id="PS00854">
    <property type="entry name" value="PROTEASOME_BETA_1"/>
    <property type="match status" value="1"/>
</dbReference>
<dbReference type="PROSITE" id="PS51476">
    <property type="entry name" value="PROTEASOME_BETA_2"/>
    <property type="match status" value="1"/>
</dbReference>
<comment type="function">
    <text evidence="1">Component of the proteasome core, a large protease complex with broad specificity involved in protein degradation.</text>
</comment>
<comment type="catalytic activity">
    <reaction evidence="1">
        <text>Cleavage of peptide bonds with very broad specificity.</text>
        <dbReference type="EC" id="3.4.25.1"/>
    </reaction>
</comment>
<comment type="activity regulation">
    <text evidence="1">The formation of the proteasomal ATPase PAN-20S proteasome complex, via the docking of the C-termini of PAN into the intersubunit pockets in the alpha-rings, triggers opening of the gate for substrate entry. Interconversion between the open-gate and close-gate conformations leads to a dynamic regulation of the 20S proteasome proteolysis activity.</text>
</comment>
<comment type="subunit">
    <text evidence="1">The 20S proteasome core is composed of 14 alpha and 14 beta subunits that assemble into four stacked heptameric rings, resulting in a barrel-shaped structure. The two inner rings, each composed of seven catalytic beta subunits, are sandwiched by two outer rings, each composed of seven alpha subunits. The catalytic chamber with the active sites is on the inside of the barrel. Has a gated structure, the ends of the cylinder being occluded by the N-termini of the alpha-subunits. Is capped at one or both ends by the proteasome regulatory ATPase, PAN.</text>
</comment>
<comment type="subcellular location">
    <subcellularLocation>
        <location evidence="1">Cytoplasm</location>
    </subcellularLocation>
</comment>
<comment type="similarity">
    <text evidence="1">Belongs to the peptidase T1B family.</text>
</comment>
<name>PSB_METTE</name>
<feature type="propeptide" id="PRO_0000026663" description="Removed in mature form; by autocatalysis" evidence="1">
    <location>
        <begin position="1"/>
        <end position="9"/>
    </location>
</feature>
<feature type="chain" id="PRO_0000026664" description="Proteasome subunit beta">
    <location>
        <begin position="10"/>
        <end position="210"/>
    </location>
</feature>
<feature type="active site" description="Nucleophile" evidence="1">
    <location>
        <position position="10"/>
    </location>
</feature>
<reference key="1">
    <citation type="journal article" date="1995" name="J. Biol. Chem.">
        <title>A proteasome from the methanogenic archaeon Methanosarcina thermophila.</title>
        <authorList>
            <person name="Maupin-Furlow J.A."/>
            <person name="Ferry J.G."/>
        </authorList>
    </citation>
    <scope>NUCLEOTIDE SEQUENCE [GENOMIC DNA]</scope>
    <source>
        <strain>ATCC 43570 / DSM 1825 / OCM 12 / TM-1</strain>
    </source>
</reference>
<accession>Q9P992</accession>
<accession>Q50534</accession>
<keyword id="KW-0068">Autocatalytic cleavage</keyword>
<keyword id="KW-0963">Cytoplasm</keyword>
<keyword id="KW-0378">Hydrolase</keyword>
<keyword id="KW-0645">Protease</keyword>
<keyword id="KW-0647">Proteasome</keyword>
<keyword id="KW-0888">Threonine protease</keyword>
<keyword id="KW-0865">Zymogen</keyword>
<proteinExistence type="inferred from homology"/>
<gene>
    <name evidence="1" type="primary">psmB</name>
</gene>
<evidence type="ECO:0000255" key="1">
    <source>
        <dbReference type="HAMAP-Rule" id="MF_02113"/>
    </source>
</evidence>
<sequence>MDNDKYLKGTTTVGVVCTDGIVLASEQRATMGHFIASKTAKKVYQIDDLVGMTTAGSVGDAQQLVRLVSVESQLYKMRRDESMTIKGITTLMSNFLSRNRYYPMMVQLLIGGVDKNGPGIYSLDAMGGSIEETRISATGSGSPMAYGVLEDQYRENMTVKEGLDLAIRAIHNATKRDSASGENIDVVVITKEAFKRLDPEEVKSRRALLN</sequence>
<protein>
    <recommendedName>
        <fullName evidence="1">Proteasome subunit beta</fullName>
        <ecNumber evidence="1">3.4.25.1</ecNumber>
    </recommendedName>
    <alternativeName>
        <fullName evidence="1">20S proteasome beta subunit</fullName>
    </alternativeName>
    <alternativeName>
        <fullName evidence="1">Proteasome core protein PsmB</fullName>
    </alternativeName>
</protein>
<organism>
    <name type="scientific">Methanosarcina thermophila</name>
    <dbReference type="NCBI Taxonomy" id="2210"/>
    <lineage>
        <taxon>Archaea</taxon>
        <taxon>Methanobacteriati</taxon>
        <taxon>Methanobacteriota</taxon>
        <taxon>Stenosarchaea group</taxon>
        <taxon>Methanomicrobia</taxon>
        <taxon>Methanosarcinales</taxon>
        <taxon>Methanosarcinaceae</taxon>
        <taxon>Methanosarcina</taxon>
    </lineage>
</organism>